<proteinExistence type="inferred from homology"/>
<protein>
    <recommendedName>
        <fullName evidence="1">Trigger factor</fullName>
        <shortName evidence="1">TF</shortName>
        <ecNumber evidence="1">5.2.1.8</ecNumber>
    </recommendedName>
    <alternativeName>
        <fullName evidence="1">PPIase</fullName>
    </alternativeName>
</protein>
<accession>Q8CNY4</accession>
<sequence>MTATWEKKEGNEGVLTVTVPAEKVNKALDQAFKKVVKQINVPGFRKGKVPRPIFEQRFGVEALYQDAVDILLPEAYGEAIEETEINPVAQPEVNVTQIEKGKDFIFEATVTVEPEVKLGDYKGLEIEKQETDLSDEELQESIDHSLSHLAEMVVKEDGAVENGDTVNIDFSGSVDGEEFDGGQAEGYDLEIGSGSFIPGFEEQIEGMKTGDEKDVVVTFPEEYHAEELAGKEATFKTKVNEIKFKDVPELNDEIANELDSDAENVDEYKENLRKRLSEQKATEAENTEKEEAINKATENASIDIPEAMINTELDRMIQEFGQRIQQQGLDLQTYYQISGQNEEQLRDQMKDDAEQRVKTNLTLTAIADEENIEVSDEDIDKELEKMSEQFNISVEDIKSTLGNTDIVKNDVRIQKVIDLLRDNAKYVEATKED</sequence>
<name>TIG_STAES</name>
<reference key="1">
    <citation type="journal article" date="2003" name="Mol. Microbiol.">
        <title>Genome-based analysis of virulence genes in a non-biofilm-forming Staphylococcus epidermidis strain (ATCC 12228).</title>
        <authorList>
            <person name="Zhang Y.-Q."/>
            <person name="Ren S.-X."/>
            <person name="Li H.-L."/>
            <person name="Wang Y.-X."/>
            <person name="Fu G."/>
            <person name="Yang J."/>
            <person name="Qin Z.-Q."/>
            <person name="Miao Y.-G."/>
            <person name="Wang W.-Y."/>
            <person name="Chen R.-S."/>
            <person name="Shen Y."/>
            <person name="Chen Z."/>
            <person name="Yuan Z.-H."/>
            <person name="Zhao G.-P."/>
            <person name="Qu D."/>
            <person name="Danchin A."/>
            <person name="Wen Y.-M."/>
        </authorList>
    </citation>
    <scope>NUCLEOTIDE SEQUENCE [LARGE SCALE GENOMIC DNA]</scope>
    <source>
        <strain>ATCC 12228 / FDA PCI 1200</strain>
    </source>
</reference>
<feature type="chain" id="PRO_0000179431" description="Trigger factor">
    <location>
        <begin position="1"/>
        <end position="433"/>
    </location>
</feature>
<feature type="domain" description="PPIase FKBP-type" evidence="1">
    <location>
        <begin position="163"/>
        <end position="248"/>
    </location>
</feature>
<comment type="function">
    <text evidence="1">Involved in protein export. Acts as a chaperone by maintaining the newly synthesized protein in an open conformation. Functions as a peptidyl-prolyl cis-trans isomerase.</text>
</comment>
<comment type="catalytic activity">
    <reaction evidence="1">
        <text>[protein]-peptidylproline (omega=180) = [protein]-peptidylproline (omega=0)</text>
        <dbReference type="Rhea" id="RHEA:16237"/>
        <dbReference type="Rhea" id="RHEA-COMP:10747"/>
        <dbReference type="Rhea" id="RHEA-COMP:10748"/>
        <dbReference type="ChEBI" id="CHEBI:83833"/>
        <dbReference type="ChEBI" id="CHEBI:83834"/>
        <dbReference type="EC" id="5.2.1.8"/>
    </reaction>
</comment>
<comment type="subcellular location">
    <subcellularLocation>
        <location>Cytoplasm</location>
    </subcellularLocation>
    <text evidence="1">About half TF is bound to the ribosome near the polypeptide exit tunnel while the other half is free in the cytoplasm.</text>
</comment>
<comment type="domain">
    <text evidence="1">Consists of 3 domains; the N-terminus binds the ribosome, the middle domain has PPIase activity, while the C-terminus has intrinsic chaperone activity on its own.</text>
</comment>
<comment type="similarity">
    <text evidence="1">Belongs to the FKBP-type PPIase family. Tig subfamily.</text>
</comment>
<keyword id="KW-0131">Cell cycle</keyword>
<keyword id="KW-0132">Cell division</keyword>
<keyword id="KW-0143">Chaperone</keyword>
<keyword id="KW-0963">Cytoplasm</keyword>
<keyword id="KW-0413">Isomerase</keyword>
<keyword id="KW-0697">Rotamase</keyword>
<organism>
    <name type="scientific">Staphylococcus epidermidis (strain ATCC 12228 / FDA PCI 1200)</name>
    <dbReference type="NCBI Taxonomy" id="176280"/>
    <lineage>
        <taxon>Bacteria</taxon>
        <taxon>Bacillati</taxon>
        <taxon>Bacillota</taxon>
        <taxon>Bacilli</taxon>
        <taxon>Bacillales</taxon>
        <taxon>Staphylococcaceae</taxon>
        <taxon>Staphylococcus</taxon>
    </lineage>
</organism>
<evidence type="ECO:0000255" key="1">
    <source>
        <dbReference type="HAMAP-Rule" id="MF_00303"/>
    </source>
</evidence>
<gene>
    <name evidence="1" type="primary">tig</name>
    <name type="ordered locus">SE_1350</name>
</gene>
<dbReference type="EC" id="5.2.1.8" evidence="1"/>
<dbReference type="EMBL" id="AE015929">
    <property type="protein sequence ID" value="AAO04949.1"/>
    <property type="molecule type" value="Genomic_DNA"/>
</dbReference>
<dbReference type="RefSeq" id="NP_764905.1">
    <property type="nucleotide sequence ID" value="NC_004461.1"/>
</dbReference>
<dbReference type="RefSeq" id="WP_001830810.1">
    <property type="nucleotide sequence ID" value="NZ_WBME01000016.1"/>
</dbReference>
<dbReference type="SMR" id="Q8CNY4"/>
<dbReference type="GeneID" id="50018535"/>
<dbReference type="KEGG" id="sep:SE_1350"/>
<dbReference type="PATRIC" id="fig|176280.10.peg.1319"/>
<dbReference type="eggNOG" id="COG0544">
    <property type="taxonomic scope" value="Bacteria"/>
</dbReference>
<dbReference type="HOGENOM" id="CLU_033058_3_2_9"/>
<dbReference type="OrthoDB" id="9767721at2"/>
<dbReference type="Proteomes" id="UP000001411">
    <property type="component" value="Chromosome"/>
</dbReference>
<dbReference type="GO" id="GO:0005737">
    <property type="term" value="C:cytoplasm"/>
    <property type="evidence" value="ECO:0007669"/>
    <property type="project" value="UniProtKB-SubCell"/>
</dbReference>
<dbReference type="GO" id="GO:0003755">
    <property type="term" value="F:peptidyl-prolyl cis-trans isomerase activity"/>
    <property type="evidence" value="ECO:0007669"/>
    <property type="project" value="UniProtKB-UniRule"/>
</dbReference>
<dbReference type="GO" id="GO:0044183">
    <property type="term" value="F:protein folding chaperone"/>
    <property type="evidence" value="ECO:0007669"/>
    <property type="project" value="TreeGrafter"/>
</dbReference>
<dbReference type="GO" id="GO:0043022">
    <property type="term" value="F:ribosome binding"/>
    <property type="evidence" value="ECO:0007669"/>
    <property type="project" value="TreeGrafter"/>
</dbReference>
<dbReference type="GO" id="GO:0051083">
    <property type="term" value="P:'de novo' cotranslational protein folding"/>
    <property type="evidence" value="ECO:0007669"/>
    <property type="project" value="TreeGrafter"/>
</dbReference>
<dbReference type="GO" id="GO:0051301">
    <property type="term" value="P:cell division"/>
    <property type="evidence" value="ECO:0007669"/>
    <property type="project" value="UniProtKB-KW"/>
</dbReference>
<dbReference type="GO" id="GO:0061077">
    <property type="term" value="P:chaperone-mediated protein folding"/>
    <property type="evidence" value="ECO:0007669"/>
    <property type="project" value="TreeGrafter"/>
</dbReference>
<dbReference type="GO" id="GO:0015031">
    <property type="term" value="P:protein transport"/>
    <property type="evidence" value="ECO:0007669"/>
    <property type="project" value="UniProtKB-UniRule"/>
</dbReference>
<dbReference type="GO" id="GO:0043335">
    <property type="term" value="P:protein unfolding"/>
    <property type="evidence" value="ECO:0007669"/>
    <property type="project" value="TreeGrafter"/>
</dbReference>
<dbReference type="FunFam" id="3.10.50.40:FF:000001">
    <property type="entry name" value="Trigger factor"/>
    <property type="match status" value="1"/>
</dbReference>
<dbReference type="FunFam" id="3.30.70.1050:FF:000002">
    <property type="entry name" value="Trigger factor"/>
    <property type="match status" value="1"/>
</dbReference>
<dbReference type="Gene3D" id="3.10.50.40">
    <property type="match status" value="1"/>
</dbReference>
<dbReference type="Gene3D" id="3.30.70.1050">
    <property type="entry name" value="Trigger factor ribosome-binding domain"/>
    <property type="match status" value="1"/>
</dbReference>
<dbReference type="Gene3D" id="1.10.3120.10">
    <property type="entry name" value="Trigger factor, C-terminal domain"/>
    <property type="match status" value="1"/>
</dbReference>
<dbReference type="HAMAP" id="MF_00303">
    <property type="entry name" value="Trigger_factor_Tig"/>
    <property type="match status" value="1"/>
</dbReference>
<dbReference type="InterPro" id="IPR046357">
    <property type="entry name" value="PPIase_dom_sf"/>
</dbReference>
<dbReference type="InterPro" id="IPR001179">
    <property type="entry name" value="PPIase_FKBP_dom"/>
</dbReference>
<dbReference type="InterPro" id="IPR005215">
    <property type="entry name" value="Trig_fac"/>
</dbReference>
<dbReference type="InterPro" id="IPR008880">
    <property type="entry name" value="Trigger_fac_C"/>
</dbReference>
<dbReference type="InterPro" id="IPR037041">
    <property type="entry name" value="Trigger_fac_C_sf"/>
</dbReference>
<dbReference type="InterPro" id="IPR008881">
    <property type="entry name" value="Trigger_fac_ribosome-bd_bac"/>
</dbReference>
<dbReference type="InterPro" id="IPR036611">
    <property type="entry name" value="Trigger_fac_ribosome-bd_sf"/>
</dbReference>
<dbReference type="InterPro" id="IPR027304">
    <property type="entry name" value="Trigger_fact/SurA_dom_sf"/>
</dbReference>
<dbReference type="NCBIfam" id="TIGR00115">
    <property type="entry name" value="tig"/>
    <property type="match status" value="1"/>
</dbReference>
<dbReference type="PANTHER" id="PTHR30560">
    <property type="entry name" value="TRIGGER FACTOR CHAPERONE AND PEPTIDYL-PROLYL CIS/TRANS ISOMERASE"/>
    <property type="match status" value="1"/>
</dbReference>
<dbReference type="PANTHER" id="PTHR30560:SF3">
    <property type="entry name" value="TRIGGER FACTOR-LIKE PROTEIN TIG, CHLOROPLASTIC"/>
    <property type="match status" value="1"/>
</dbReference>
<dbReference type="Pfam" id="PF00254">
    <property type="entry name" value="FKBP_C"/>
    <property type="match status" value="1"/>
</dbReference>
<dbReference type="Pfam" id="PF05698">
    <property type="entry name" value="Trigger_C"/>
    <property type="match status" value="1"/>
</dbReference>
<dbReference type="Pfam" id="PF05697">
    <property type="entry name" value="Trigger_N"/>
    <property type="match status" value="1"/>
</dbReference>
<dbReference type="PIRSF" id="PIRSF003095">
    <property type="entry name" value="Trigger_factor"/>
    <property type="match status" value="1"/>
</dbReference>
<dbReference type="SUPFAM" id="SSF54534">
    <property type="entry name" value="FKBP-like"/>
    <property type="match status" value="1"/>
</dbReference>
<dbReference type="SUPFAM" id="SSF109998">
    <property type="entry name" value="Triger factor/SurA peptide-binding domain-like"/>
    <property type="match status" value="1"/>
</dbReference>
<dbReference type="SUPFAM" id="SSF102735">
    <property type="entry name" value="Trigger factor ribosome-binding domain"/>
    <property type="match status" value="1"/>
</dbReference>
<dbReference type="PROSITE" id="PS50059">
    <property type="entry name" value="FKBP_PPIASE"/>
    <property type="match status" value="1"/>
</dbReference>